<reference key="1">
    <citation type="journal article" date="2007" name="Nature">
        <title>Evolution of genes and genomes on the Drosophila phylogeny.</title>
        <authorList>
            <consortium name="Drosophila 12 genomes consortium"/>
        </authorList>
    </citation>
    <scope>NUCLEOTIDE SEQUENCE [LARGE SCALE GENOMIC DNA]</scope>
    <source>
        <strain>Rob3c / Tucson 14021-0248.25</strain>
    </source>
</reference>
<sequence length="227" mass="26011">MALSIFKDLPAEHPRHLIPSLCRQFYHLGWVTGTGGGMSIKYNDEIYIAPSGVQKERMQPEDLFVQDITGKDLQLPPEIKGLKKSQCTPLFMLAYQHRQAGAVIHTHSQHAVMATLLWPGKTFRCTHLEMIKGVYDEADKRYLRYDEELVVPIIENTPFERDLADSMYAAMMEYPGCSAILVRRHGVYVWGQNWEKAKTMSECYDYLFSIAVEMKKAGIDPEKFESS</sequence>
<gene>
    <name type="ORF">GM17635</name>
</gene>
<accession>B4IG61</accession>
<organism>
    <name type="scientific">Drosophila sechellia</name>
    <name type="common">Fruit fly</name>
    <dbReference type="NCBI Taxonomy" id="7238"/>
    <lineage>
        <taxon>Eukaryota</taxon>
        <taxon>Metazoa</taxon>
        <taxon>Ecdysozoa</taxon>
        <taxon>Arthropoda</taxon>
        <taxon>Hexapoda</taxon>
        <taxon>Insecta</taxon>
        <taxon>Pterygota</taxon>
        <taxon>Neoptera</taxon>
        <taxon>Endopterygota</taxon>
        <taxon>Diptera</taxon>
        <taxon>Brachycera</taxon>
        <taxon>Muscomorpha</taxon>
        <taxon>Ephydroidea</taxon>
        <taxon>Drosophilidae</taxon>
        <taxon>Drosophila</taxon>
        <taxon>Sophophora</taxon>
    </lineage>
</organism>
<keyword id="KW-0028">Amino-acid biosynthesis</keyword>
<keyword id="KW-0963">Cytoplasm</keyword>
<keyword id="KW-0456">Lyase</keyword>
<keyword id="KW-0479">Metal-binding</keyword>
<keyword id="KW-0486">Methionine biosynthesis</keyword>
<keyword id="KW-1185">Reference proteome</keyword>
<keyword id="KW-0862">Zinc</keyword>
<evidence type="ECO:0000255" key="1">
    <source>
        <dbReference type="HAMAP-Rule" id="MF_03116"/>
    </source>
</evidence>
<name>MTNB_DROSE</name>
<dbReference type="EC" id="4.2.1.109" evidence="1"/>
<dbReference type="EMBL" id="CH480835">
    <property type="protein sequence ID" value="EDW48795.1"/>
    <property type="molecule type" value="Genomic_DNA"/>
</dbReference>
<dbReference type="SMR" id="B4IG61"/>
<dbReference type="STRING" id="7238.B4IG61"/>
<dbReference type="EnsemblMetazoa" id="FBtr0200620">
    <property type="protein sequence ID" value="FBpp0199112"/>
    <property type="gene ID" value="FBgn0172543"/>
</dbReference>
<dbReference type="EnsemblMetazoa" id="XM_002042685.2">
    <property type="protein sequence ID" value="XP_002042721.1"/>
    <property type="gene ID" value="LOC6618451"/>
</dbReference>
<dbReference type="GeneID" id="6618451"/>
<dbReference type="KEGG" id="dse:6618451"/>
<dbReference type="HOGENOM" id="CLU_006033_4_0_1"/>
<dbReference type="OMA" id="WFPGTSG"/>
<dbReference type="OrthoDB" id="2610at7215"/>
<dbReference type="PhylomeDB" id="B4IG61"/>
<dbReference type="UniPathway" id="UPA00904">
    <property type="reaction ID" value="UER00875"/>
</dbReference>
<dbReference type="Proteomes" id="UP000001292">
    <property type="component" value="Unassembled WGS sequence"/>
</dbReference>
<dbReference type="GO" id="GO:0005737">
    <property type="term" value="C:cytoplasm"/>
    <property type="evidence" value="ECO:0007669"/>
    <property type="project" value="UniProtKB-SubCell"/>
</dbReference>
<dbReference type="GO" id="GO:0046570">
    <property type="term" value="F:methylthioribulose 1-phosphate dehydratase activity"/>
    <property type="evidence" value="ECO:0000250"/>
    <property type="project" value="UniProtKB"/>
</dbReference>
<dbReference type="GO" id="GO:0008270">
    <property type="term" value="F:zinc ion binding"/>
    <property type="evidence" value="ECO:0000250"/>
    <property type="project" value="UniProtKB"/>
</dbReference>
<dbReference type="GO" id="GO:0019509">
    <property type="term" value="P:L-methionine salvage from methylthioadenosine"/>
    <property type="evidence" value="ECO:0007669"/>
    <property type="project" value="UniProtKB-UniRule"/>
</dbReference>
<dbReference type="FunFam" id="3.40.225.10:FF:000003">
    <property type="entry name" value="Methylthioribulose-1-phosphate dehydratase"/>
    <property type="match status" value="1"/>
</dbReference>
<dbReference type="Gene3D" id="3.40.225.10">
    <property type="entry name" value="Class II aldolase/adducin N-terminal domain"/>
    <property type="match status" value="1"/>
</dbReference>
<dbReference type="HAMAP" id="MF_03116">
    <property type="entry name" value="Salvage_MtnB_euk"/>
    <property type="match status" value="1"/>
</dbReference>
<dbReference type="InterPro" id="IPR001303">
    <property type="entry name" value="Aldolase_II/adducin_N"/>
</dbReference>
<dbReference type="InterPro" id="IPR036409">
    <property type="entry name" value="Aldolase_II/adducin_N_sf"/>
</dbReference>
<dbReference type="InterPro" id="IPR017714">
    <property type="entry name" value="MethylthioRu-1-P_deHdtase_MtnB"/>
</dbReference>
<dbReference type="InterPro" id="IPR027514">
    <property type="entry name" value="Salvage_MtnB_euk"/>
</dbReference>
<dbReference type="NCBIfam" id="TIGR03328">
    <property type="entry name" value="salvage_mtnB"/>
    <property type="match status" value="1"/>
</dbReference>
<dbReference type="PANTHER" id="PTHR10640">
    <property type="entry name" value="METHYLTHIORIBULOSE-1-PHOSPHATE DEHYDRATASE"/>
    <property type="match status" value="1"/>
</dbReference>
<dbReference type="PANTHER" id="PTHR10640:SF7">
    <property type="entry name" value="METHYLTHIORIBULOSE-1-PHOSPHATE DEHYDRATASE"/>
    <property type="match status" value="1"/>
</dbReference>
<dbReference type="Pfam" id="PF00596">
    <property type="entry name" value="Aldolase_II"/>
    <property type="match status" value="1"/>
</dbReference>
<dbReference type="SMART" id="SM01007">
    <property type="entry name" value="Aldolase_II"/>
    <property type="match status" value="1"/>
</dbReference>
<dbReference type="SUPFAM" id="SSF53639">
    <property type="entry name" value="AraD/HMP-PK domain-like"/>
    <property type="match status" value="1"/>
</dbReference>
<comment type="function">
    <text evidence="1">Catalyzes the dehydration of methylthioribulose-1-phosphate (MTRu-1-P) into 2,3-diketo-5-methylthiopentyl-1-phosphate (DK-MTP-1-P).</text>
</comment>
<comment type="catalytic activity">
    <reaction evidence="1">
        <text>5-(methylsulfanyl)-D-ribulose 1-phosphate = 5-methylsulfanyl-2,3-dioxopentyl phosphate + H2O</text>
        <dbReference type="Rhea" id="RHEA:15549"/>
        <dbReference type="ChEBI" id="CHEBI:15377"/>
        <dbReference type="ChEBI" id="CHEBI:58548"/>
        <dbReference type="ChEBI" id="CHEBI:58828"/>
        <dbReference type="EC" id="4.2.1.109"/>
    </reaction>
</comment>
<comment type="cofactor">
    <cofactor evidence="1">
        <name>Zn(2+)</name>
        <dbReference type="ChEBI" id="CHEBI:29105"/>
    </cofactor>
    <text evidence="1">Binds 1 zinc ion per subunit.</text>
</comment>
<comment type="pathway">
    <text evidence="1">Amino-acid biosynthesis; L-methionine biosynthesis via salvage pathway; L-methionine from S-methyl-5-thio-alpha-D-ribose 1-phosphate: step 2/6.</text>
</comment>
<comment type="subcellular location">
    <subcellularLocation>
        <location evidence="1">Cytoplasm</location>
    </subcellularLocation>
</comment>
<comment type="similarity">
    <text evidence="1">Belongs to the aldolase class II family. MtnB subfamily.</text>
</comment>
<protein>
    <recommendedName>
        <fullName evidence="1">Probable methylthioribulose-1-phosphate dehydratase</fullName>
        <shortName evidence="1">MTRu-1-P dehydratase</shortName>
        <ecNumber evidence="1">4.2.1.109</ecNumber>
    </recommendedName>
</protein>
<proteinExistence type="inferred from homology"/>
<feature type="chain" id="PRO_0000393787" description="Probable methylthioribulose-1-phosphate dehydratase">
    <location>
        <begin position="1"/>
        <end position="227"/>
    </location>
</feature>
<feature type="active site" description="Proton donor/acceptor" evidence="1">
    <location>
        <position position="129"/>
    </location>
</feature>
<feature type="binding site" evidence="1">
    <location>
        <position position="87"/>
    </location>
    <ligand>
        <name>substrate</name>
    </ligand>
</feature>
<feature type="binding site" evidence="1">
    <location>
        <position position="105"/>
    </location>
    <ligand>
        <name>Zn(2+)</name>
        <dbReference type="ChEBI" id="CHEBI:29105"/>
    </ligand>
</feature>
<feature type="binding site" evidence="1">
    <location>
        <position position="107"/>
    </location>
    <ligand>
        <name>Zn(2+)</name>
        <dbReference type="ChEBI" id="CHEBI:29105"/>
    </ligand>
</feature>
<feature type="binding site" evidence="1">
    <location>
        <position position="185"/>
    </location>
    <ligand>
        <name>Zn(2+)</name>
        <dbReference type="ChEBI" id="CHEBI:29105"/>
    </ligand>
</feature>